<reference key="1">
    <citation type="journal article" date="2003" name="Biochim. Biophys. Acta">
        <title>Roc, a Ras/GTPase domain in complex proteins.</title>
        <authorList>
            <person name="Bosgraaf L."/>
            <person name="van Haastert P.J.M."/>
        </authorList>
    </citation>
    <scope>NUCLEOTIDE SEQUENCE [GENOMIC DNA]</scope>
</reference>
<reference key="2">
    <citation type="journal article" date="2005" name="Nature">
        <title>The genome of the social amoeba Dictyostelium discoideum.</title>
        <authorList>
            <person name="Eichinger L."/>
            <person name="Pachebat J.A."/>
            <person name="Gloeckner G."/>
            <person name="Rajandream M.A."/>
            <person name="Sucgang R."/>
            <person name="Berriman M."/>
            <person name="Song J."/>
            <person name="Olsen R."/>
            <person name="Szafranski K."/>
            <person name="Xu Q."/>
            <person name="Tunggal B."/>
            <person name="Kummerfeld S."/>
            <person name="Madera M."/>
            <person name="Konfortov B.A."/>
            <person name="Rivero F."/>
            <person name="Bankier A.T."/>
            <person name="Lehmann R."/>
            <person name="Hamlin N."/>
            <person name="Davies R."/>
            <person name="Gaudet P."/>
            <person name="Fey P."/>
            <person name="Pilcher K."/>
            <person name="Chen G."/>
            <person name="Saunders D."/>
            <person name="Sodergren E.J."/>
            <person name="Davis P."/>
            <person name="Kerhornou A."/>
            <person name="Nie X."/>
            <person name="Hall N."/>
            <person name="Anjard C."/>
            <person name="Hemphill L."/>
            <person name="Bason N."/>
            <person name="Farbrother P."/>
            <person name="Desany B."/>
            <person name="Just E."/>
            <person name="Morio T."/>
            <person name="Rost R."/>
            <person name="Churcher C.M."/>
            <person name="Cooper J."/>
            <person name="Haydock S."/>
            <person name="van Driessche N."/>
            <person name="Cronin A."/>
            <person name="Goodhead I."/>
            <person name="Muzny D.M."/>
            <person name="Mourier T."/>
            <person name="Pain A."/>
            <person name="Lu M."/>
            <person name="Harper D."/>
            <person name="Lindsay R."/>
            <person name="Hauser H."/>
            <person name="James K.D."/>
            <person name="Quiles M."/>
            <person name="Madan Babu M."/>
            <person name="Saito T."/>
            <person name="Buchrieser C."/>
            <person name="Wardroper A."/>
            <person name="Felder M."/>
            <person name="Thangavelu M."/>
            <person name="Johnson D."/>
            <person name="Knights A."/>
            <person name="Loulseged H."/>
            <person name="Mungall K.L."/>
            <person name="Oliver K."/>
            <person name="Price C."/>
            <person name="Quail M.A."/>
            <person name="Urushihara H."/>
            <person name="Hernandez J."/>
            <person name="Rabbinowitsch E."/>
            <person name="Steffen D."/>
            <person name="Sanders M."/>
            <person name="Ma J."/>
            <person name="Kohara Y."/>
            <person name="Sharp S."/>
            <person name="Simmonds M.N."/>
            <person name="Spiegler S."/>
            <person name="Tivey A."/>
            <person name="Sugano S."/>
            <person name="White B."/>
            <person name="Walker D."/>
            <person name="Woodward J.R."/>
            <person name="Winckler T."/>
            <person name="Tanaka Y."/>
            <person name="Shaulsky G."/>
            <person name="Schleicher M."/>
            <person name="Weinstock G.M."/>
            <person name="Rosenthal A."/>
            <person name="Cox E.C."/>
            <person name="Chisholm R.L."/>
            <person name="Gibbs R.A."/>
            <person name="Loomis W.F."/>
            <person name="Platzer M."/>
            <person name="Kay R.R."/>
            <person name="Williams J.G."/>
            <person name="Dear P.H."/>
            <person name="Noegel A.A."/>
            <person name="Barrell B.G."/>
            <person name="Kuspa A."/>
        </authorList>
    </citation>
    <scope>NUCLEOTIDE SEQUENCE [LARGE SCALE GENOMIC DNA]</scope>
    <source>
        <strain>AX4</strain>
    </source>
</reference>
<protein>
    <recommendedName>
        <fullName>Probable serine/threonine-protein kinase roco6</fullName>
        <ecNumber>2.7.11.1</ecNumber>
    </recommendedName>
    <alternativeName>
        <fullName>Ras of complex proteins and C-terminal of roc 6</fullName>
    </alternativeName>
</protein>
<gene>
    <name type="primary">roco6</name>
    <name type="ORF">DDB_G0279417</name>
</gene>
<dbReference type="EC" id="2.7.11.1"/>
<dbReference type="EMBL" id="AY232268">
    <property type="protein sequence ID" value="AAO83651.1"/>
    <property type="molecule type" value="Genomic_DNA"/>
</dbReference>
<dbReference type="EMBL" id="AAFI02000031">
    <property type="protein sequence ID" value="EAL67647.1"/>
    <property type="molecule type" value="Genomic_DNA"/>
</dbReference>
<dbReference type="RefSeq" id="XP_641642.1">
    <property type="nucleotide sequence ID" value="XM_636550.1"/>
</dbReference>
<dbReference type="SMR" id="Q54WS5"/>
<dbReference type="FunCoup" id="Q54WS5">
    <property type="interactions" value="118"/>
</dbReference>
<dbReference type="STRING" id="44689.Q54WS5"/>
<dbReference type="PaxDb" id="44689-DDB0214834"/>
<dbReference type="EnsemblProtists" id="EAL67647">
    <property type="protein sequence ID" value="EAL67647"/>
    <property type="gene ID" value="DDB_G0279417"/>
</dbReference>
<dbReference type="GeneID" id="8622048"/>
<dbReference type="KEGG" id="ddi:DDB_G0279417"/>
<dbReference type="dictyBase" id="DDB_G0279417">
    <property type="gene designation" value="roco6"/>
</dbReference>
<dbReference type="VEuPathDB" id="AmoebaDB:DDB_G0279417"/>
<dbReference type="eggNOG" id="KOG0192">
    <property type="taxonomic scope" value="Eukaryota"/>
</dbReference>
<dbReference type="HOGENOM" id="CLU_231803_0_0_1"/>
<dbReference type="InParanoid" id="Q54WS5"/>
<dbReference type="OMA" id="ERIYQCW"/>
<dbReference type="PhylomeDB" id="Q54WS5"/>
<dbReference type="PRO" id="PR:Q54WS5"/>
<dbReference type="Proteomes" id="UP000002195">
    <property type="component" value="Chromosome 3"/>
</dbReference>
<dbReference type="GO" id="GO:0005737">
    <property type="term" value="C:cytoplasm"/>
    <property type="evidence" value="ECO:0000318"/>
    <property type="project" value="GO_Central"/>
</dbReference>
<dbReference type="GO" id="GO:0005829">
    <property type="term" value="C:cytosol"/>
    <property type="evidence" value="ECO:0000314"/>
    <property type="project" value="dictyBase"/>
</dbReference>
<dbReference type="GO" id="GO:0016020">
    <property type="term" value="C:membrane"/>
    <property type="evidence" value="ECO:0007669"/>
    <property type="project" value="UniProtKB-SubCell"/>
</dbReference>
<dbReference type="GO" id="GO:0005524">
    <property type="term" value="F:ATP binding"/>
    <property type="evidence" value="ECO:0007669"/>
    <property type="project" value="UniProtKB-KW"/>
</dbReference>
<dbReference type="GO" id="GO:0005525">
    <property type="term" value="F:GTP binding"/>
    <property type="evidence" value="ECO:0007669"/>
    <property type="project" value="UniProtKB-KW"/>
</dbReference>
<dbReference type="GO" id="GO:0004672">
    <property type="term" value="F:protein kinase activity"/>
    <property type="evidence" value="ECO:0000318"/>
    <property type="project" value="GO_Central"/>
</dbReference>
<dbReference type="GO" id="GO:0106310">
    <property type="term" value="F:protein serine kinase activity"/>
    <property type="evidence" value="ECO:0007669"/>
    <property type="project" value="RHEA"/>
</dbReference>
<dbReference type="GO" id="GO:0004674">
    <property type="term" value="F:protein serine/threonine kinase activity"/>
    <property type="evidence" value="ECO:0007669"/>
    <property type="project" value="UniProtKB-KW"/>
</dbReference>
<dbReference type="GO" id="GO:0007165">
    <property type="term" value="P:signal transduction"/>
    <property type="evidence" value="ECO:0000318"/>
    <property type="project" value="GO_Central"/>
</dbReference>
<dbReference type="CDD" id="cd13999">
    <property type="entry name" value="STKc_MAP3K-like"/>
    <property type="match status" value="1"/>
</dbReference>
<dbReference type="Gene3D" id="3.30.310.200">
    <property type="match status" value="1"/>
</dbReference>
<dbReference type="Gene3D" id="3.40.50.300">
    <property type="entry name" value="P-loop containing nucleotide triphosphate hydrolases"/>
    <property type="match status" value="1"/>
</dbReference>
<dbReference type="Gene3D" id="2.30.29.30">
    <property type="entry name" value="Pleckstrin-homology domain (PH domain)/Phosphotyrosine-binding domain (PTB)"/>
    <property type="match status" value="1"/>
</dbReference>
<dbReference type="Gene3D" id="3.80.10.10">
    <property type="entry name" value="Ribonuclease Inhibitor"/>
    <property type="match status" value="2"/>
</dbReference>
<dbReference type="Gene3D" id="3.30.70.1390">
    <property type="entry name" value="ROC domain from the Parkinson's disease-associated leucine-rich repeat kinase 2"/>
    <property type="match status" value="2"/>
</dbReference>
<dbReference type="Gene3D" id="1.10.510.10">
    <property type="entry name" value="Transferase(Phosphotransferase) domain 1"/>
    <property type="match status" value="1"/>
</dbReference>
<dbReference type="Gene3D" id="2.130.10.10">
    <property type="entry name" value="YVTN repeat-like/Quinoprotein amine dehydrogenase"/>
    <property type="match status" value="2"/>
</dbReference>
<dbReference type="InterPro" id="IPR032171">
    <property type="entry name" value="COR-A"/>
</dbReference>
<dbReference type="InterPro" id="IPR011009">
    <property type="entry name" value="Kinase-like_dom_sf"/>
</dbReference>
<dbReference type="InterPro" id="IPR001611">
    <property type="entry name" value="Leu-rich_rpt"/>
</dbReference>
<dbReference type="InterPro" id="IPR025875">
    <property type="entry name" value="Leu-rich_rpt_4"/>
</dbReference>
<dbReference type="InterPro" id="IPR003591">
    <property type="entry name" value="Leu-rich_rpt_typical-subtyp"/>
</dbReference>
<dbReference type="InterPro" id="IPR032675">
    <property type="entry name" value="LRR_dom_sf"/>
</dbReference>
<dbReference type="InterPro" id="IPR027417">
    <property type="entry name" value="P-loop_NTPase"/>
</dbReference>
<dbReference type="InterPro" id="IPR011993">
    <property type="entry name" value="PH-like_dom_sf"/>
</dbReference>
<dbReference type="InterPro" id="IPR001849">
    <property type="entry name" value="PH_domain"/>
</dbReference>
<dbReference type="InterPro" id="IPR000719">
    <property type="entry name" value="Prot_kinase_dom"/>
</dbReference>
<dbReference type="InterPro" id="IPR017441">
    <property type="entry name" value="Protein_kinase_ATP_BS"/>
</dbReference>
<dbReference type="InterPro" id="IPR011047">
    <property type="entry name" value="Quinoprotein_ADH-like_sf"/>
</dbReference>
<dbReference type="InterPro" id="IPR020859">
    <property type="entry name" value="ROC"/>
</dbReference>
<dbReference type="InterPro" id="IPR001245">
    <property type="entry name" value="Ser-Thr/Tyr_kinase_cat_dom"/>
</dbReference>
<dbReference type="InterPro" id="IPR008271">
    <property type="entry name" value="Ser/Thr_kinase_AS"/>
</dbReference>
<dbReference type="InterPro" id="IPR051681">
    <property type="entry name" value="Ser/Thr_Kinases-Pseudokinases"/>
</dbReference>
<dbReference type="InterPro" id="IPR015943">
    <property type="entry name" value="WD40/YVTN_repeat-like_dom_sf"/>
</dbReference>
<dbReference type="PANTHER" id="PTHR44329:SF288">
    <property type="entry name" value="MITOGEN-ACTIVATED PROTEIN KINASE KINASE KINASE 20"/>
    <property type="match status" value="1"/>
</dbReference>
<dbReference type="PANTHER" id="PTHR44329">
    <property type="entry name" value="SERINE/THREONINE-PROTEIN KINASE TNNI3K-RELATED"/>
    <property type="match status" value="1"/>
</dbReference>
<dbReference type="Pfam" id="PF16095">
    <property type="entry name" value="COR-A"/>
    <property type="match status" value="1"/>
</dbReference>
<dbReference type="Pfam" id="PF25497">
    <property type="entry name" value="COR-B"/>
    <property type="match status" value="1"/>
</dbReference>
<dbReference type="Pfam" id="PF12799">
    <property type="entry name" value="LRR_4"/>
    <property type="match status" value="1"/>
</dbReference>
<dbReference type="Pfam" id="PF00169">
    <property type="entry name" value="PH"/>
    <property type="match status" value="1"/>
</dbReference>
<dbReference type="Pfam" id="PF07714">
    <property type="entry name" value="PK_Tyr_Ser-Thr"/>
    <property type="match status" value="1"/>
</dbReference>
<dbReference type="Pfam" id="PF08477">
    <property type="entry name" value="Roc"/>
    <property type="match status" value="1"/>
</dbReference>
<dbReference type="SMART" id="SM00369">
    <property type="entry name" value="LRR_TYP"/>
    <property type="match status" value="7"/>
</dbReference>
<dbReference type="SMART" id="SM00233">
    <property type="entry name" value="PH"/>
    <property type="match status" value="1"/>
</dbReference>
<dbReference type="SMART" id="SM00220">
    <property type="entry name" value="S_TKc"/>
    <property type="match status" value="1"/>
</dbReference>
<dbReference type="SUPFAM" id="SSF52540">
    <property type="entry name" value="P-loop containing nucleoside triphosphate hydrolases"/>
    <property type="match status" value="1"/>
</dbReference>
<dbReference type="SUPFAM" id="SSF50729">
    <property type="entry name" value="PH domain-like"/>
    <property type="match status" value="1"/>
</dbReference>
<dbReference type="SUPFAM" id="SSF56112">
    <property type="entry name" value="Protein kinase-like (PK-like)"/>
    <property type="match status" value="1"/>
</dbReference>
<dbReference type="SUPFAM" id="SSF50998">
    <property type="entry name" value="Quinoprotein alcohol dehydrogenase-like"/>
    <property type="match status" value="1"/>
</dbReference>
<dbReference type="SUPFAM" id="SSF52047">
    <property type="entry name" value="RNI-like"/>
    <property type="match status" value="1"/>
</dbReference>
<dbReference type="PROSITE" id="PS51450">
    <property type="entry name" value="LRR"/>
    <property type="match status" value="9"/>
</dbReference>
<dbReference type="PROSITE" id="PS50003">
    <property type="entry name" value="PH_DOMAIN"/>
    <property type="match status" value="1"/>
</dbReference>
<dbReference type="PROSITE" id="PS00107">
    <property type="entry name" value="PROTEIN_KINASE_ATP"/>
    <property type="match status" value="1"/>
</dbReference>
<dbReference type="PROSITE" id="PS50011">
    <property type="entry name" value="PROTEIN_KINASE_DOM"/>
    <property type="match status" value="1"/>
</dbReference>
<dbReference type="PROSITE" id="PS00108">
    <property type="entry name" value="PROTEIN_KINASE_ST"/>
    <property type="match status" value="1"/>
</dbReference>
<dbReference type="PROSITE" id="PS51424">
    <property type="entry name" value="ROC"/>
    <property type="match status" value="1"/>
</dbReference>
<dbReference type="PROSITE" id="PS00678">
    <property type="entry name" value="WD_REPEATS_1"/>
    <property type="match status" value="1"/>
</dbReference>
<accession>Q54WS5</accession>
<accession>Q6XHB0</accession>
<comment type="function">
    <text evidence="1">May act as a serine/threonine-protein kinase and guanine-nucleotide releasing factor.</text>
</comment>
<comment type="catalytic activity">
    <reaction>
        <text>L-seryl-[protein] + ATP = O-phospho-L-seryl-[protein] + ADP + H(+)</text>
        <dbReference type="Rhea" id="RHEA:17989"/>
        <dbReference type="Rhea" id="RHEA-COMP:9863"/>
        <dbReference type="Rhea" id="RHEA-COMP:11604"/>
        <dbReference type="ChEBI" id="CHEBI:15378"/>
        <dbReference type="ChEBI" id="CHEBI:29999"/>
        <dbReference type="ChEBI" id="CHEBI:30616"/>
        <dbReference type="ChEBI" id="CHEBI:83421"/>
        <dbReference type="ChEBI" id="CHEBI:456216"/>
        <dbReference type="EC" id="2.7.11.1"/>
    </reaction>
</comment>
<comment type="catalytic activity">
    <reaction>
        <text>L-threonyl-[protein] + ATP = O-phospho-L-threonyl-[protein] + ADP + H(+)</text>
        <dbReference type="Rhea" id="RHEA:46608"/>
        <dbReference type="Rhea" id="RHEA-COMP:11060"/>
        <dbReference type="Rhea" id="RHEA-COMP:11605"/>
        <dbReference type="ChEBI" id="CHEBI:15378"/>
        <dbReference type="ChEBI" id="CHEBI:30013"/>
        <dbReference type="ChEBI" id="CHEBI:30616"/>
        <dbReference type="ChEBI" id="CHEBI:61977"/>
        <dbReference type="ChEBI" id="CHEBI:456216"/>
        <dbReference type="EC" id="2.7.11.1"/>
    </reaction>
</comment>
<comment type="subcellular location">
    <subcellularLocation>
        <location evidence="8">Membrane</location>
        <topology evidence="8">Single-pass type I membrane protein</topology>
    </subcellularLocation>
</comment>
<comment type="similarity">
    <text evidence="8">Belongs to the protein kinase superfamily. TKL Ser/Thr protein kinase family. ROCO subfamily.</text>
</comment>
<evidence type="ECO:0000250" key="1"/>
<evidence type="ECO:0000255" key="2"/>
<evidence type="ECO:0000255" key="3">
    <source>
        <dbReference type="PROSITE-ProRule" id="PRU00145"/>
    </source>
</evidence>
<evidence type="ECO:0000255" key="4">
    <source>
        <dbReference type="PROSITE-ProRule" id="PRU00159"/>
    </source>
</evidence>
<evidence type="ECO:0000255" key="5">
    <source>
        <dbReference type="PROSITE-ProRule" id="PRU00758"/>
    </source>
</evidence>
<evidence type="ECO:0000255" key="6">
    <source>
        <dbReference type="PROSITE-ProRule" id="PRU10027"/>
    </source>
</evidence>
<evidence type="ECO:0000256" key="7">
    <source>
        <dbReference type="SAM" id="MobiDB-lite"/>
    </source>
</evidence>
<evidence type="ECO:0000305" key="8"/>
<keyword id="KW-0067">ATP-binding</keyword>
<keyword id="KW-0342">GTP-binding</keyword>
<keyword id="KW-0418">Kinase</keyword>
<keyword id="KW-0433">Leucine-rich repeat</keyword>
<keyword id="KW-0472">Membrane</keyword>
<keyword id="KW-0547">Nucleotide-binding</keyword>
<keyword id="KW-1185">Reference proteome</keyword>
<keyword id="KW-0677">Repeat</keyword>
<keyword id="KW-0723">Serine/threonine-protein kinase</keyword>
<keyword id="KW-0808">Transferase</keyword>
<keyword id="KW-0812">Transmembrane</keyword>
<keyword id="KW-1133">Transmembrane helix</keyword>
<keyword id="KW-0853">WD repeat</keyword>
<name>ROCO6_DICDI</name>
<sequence length="2147" mass="239183">MNSIHKQHYTINSNHYNESININSLLLNDLNDEKRTTSTNNKSNNNSNNNNNETLEDIIEFNNNNCNGDMKYLDLSKRMIYSLELMMIPEIENRFQGDFKSISILNLNDNLLGEIPESLKQLTQLISLSIRGNHILEIPLWFPEEFKLLRKLDVSHNAISSVPNTFNKFSILEDLNLSNNYISYIHPSLFPEGIMRLNLSNNLFREVELPPWFESLLTLDISGNKLKHLGNLPFHLVRVSIDDNHLESIDHKVILRNKDLALKFNQSFSDIVLERIYQCWYTGDPVLDLSGLGMCVVPPILGMLVHLTHLDLSGNCISVLPPELANLTELVRLDLSFNILTTLPLYIVSYKRLEHLDLQGTLDTLVSPPRRIAETGKLIDIQRYFHDLFQGEPSYRVKLMIVGQENVGKTSLVKCLKMKKKFSKNSDHLGTNVSTDGIDIDEIKFNLDIELPSNPSSNSLISNSLSNSSISSNNINSNNNINVHSNGGGINSNGVNSNSQININSSSGNIHSNGGGVGNVNSSGGIHSNNSSGGGGGSNSFLNNTNSNGTNNNSSNLNINTNSNNVNSSGGGNNYHPPVGTNTSMSNIQVIGSSGSNLGSGSNLSIGGSNGNNNNNSGGSGTMVNQRVTMSIWDCAGQELYYTSHQMFLTDSALYVVVWNLCKPEVNSRVEFWLHSIRSKAENAPILLIGTHLDDYLATHSESELDEILENIYSKYFRKFRLKGISILSCSTGVGFDNFLDLLKKTVVELPSLKQSLPELYLKLEKLIIKKRSTLVPPVLTWQSFSQMVLSNLDFHDEIHVKVATKALVPLGSISFFDEPGLDQYVFLDPQWLTGVFSSIITTKHKFIKDGVLKKSDLYQIWKPPHFIEDEGLHSLLINLLERFELMFPLDSDLVSLSSSNGNNGNSYVNNNNNNNNNSNNNNNGSNKSSPFKTTPSSPSTLRLVDSKSKGSHSSNPILSGNNSSSKNSTSTKRSISGSPLRSRSNSDLDLIGGGGGSPINGSSIDYSSKSNTLTPGLFNELNQKFIIPSQLPEIRPSFGLLWPSLDHSRVEFNRWIQLSFAPAGLFSRLLIRLLISKEFDMKPILYWRNGVVVESQSGKSFLSTSTALIEMVPSYANCSSTIKISVRGDRRTGRGLSAKLLRLIVEIADTLCTSWYHLETNQVIPCPHCINKPNCTLFSLSDCEAVASSGVWYLLCGDRKINFETFVPDVAMSDFWGSGSKKFNYDQIKMHKEKRILSIKPASFGNNQIQFEVRVPPSPPPPPVQQIINNGADDNITTTTLAVNNIKVLESGGSQPPSPRSGKDVTHELPIINRLEIIQPTSDESSLIQVEFDHNNQTLVISGTYKYGDLLEIEFESPKLIGRGASGKIYRANLNDTMVAVKQLEVVGEDAPRIFSEFRREIHVMSDLKHSNVVNLLGFTLSPFTMVMEYIDCGDLHKFLHSPIGDQLNGNWALILKLALDIAKGMEFLHSVTPPLLHRDLKSPNVLLSMKDGVYTAKVGDFGLSSRMFIQALKHKLRNFPVGNITWVAPEILREEEYTVKSDVYAFGLILHELLTRKHPYREFNYSMVSLQEDAIKNGLRPTISPSYTQTVTGHEYCGLIQDCWDSDIDRRPTFNKIVKRIKQIIGRDVNNILMVNGVSVVSGIQSPNSLADSQPFHYHQQQQPSLNSTNQLQQQQYSSVLTSPRSNLSDSSNSSQNIANKSLNNISATSLGDLGGNDENLGGQLQYSMRVPQPEAKVNQLVWEVNSRRVWGGCESGEIIVWNAENGNQIFREQKLHPGPIRSLALVNQEDIWSAGGIGPQQSTIRIWNAWRFNLDDQSGTKSDFITKKGRGGSTFGRKSWRLRWFVLSRFDKTLKYYSKQTDKEPSCSLILEGAWLEEISPPGYKVSLHLIHPEKRTMEMEFKSESEKSSWLTAINRVINQNIPLYEIALGKQMTSGSENDYITNLLSVGPNVWVSLKETPSILVYNVKSKELVTKISLNDDQSSDQWGKTGAVNMMLVNNFVWITGGSKLTQIDSQSYQLLEVHGNHYSKPITSMALVEKNVWISCEDESLSVWDGDTGSFIRKVGSPIGSPTKPTVYTKLLYFSGYVWACTQGSIHIYCIHSLTCKKKVESKNHPNSIVDLIKVFQQTVWSCCGTNNVCIWS</sequence>
<feature type="chain" id="PRO_0000358892" description="Probable serine/threonine-protein kinase roco6">
    <location>
        <begin position="1"/>
        <end position="2147"/>
    </location>
</feature>
<feature type="topological domain" description="Extracellular" evidence="2">
    <location>
        <begin position="1"/>
        <end position="1055"/>
    </location>
</feature>
<feature type="transmembrane region" description="Helical" evidence="2">
    <location>
        <begin position="1056"/>
        <end position="1076"/>
    </location>
</feature>
<feature type="topological domain" description="Cytoplasmic" evidence="2">
    <location>
        <begin position="1077"/>
        <end position="2147"/>
    </location>
</feature>
<feature type="repeat" description="LRR 1">
    <location>
        <begin position="69"/>
        <end position="89"/>
    </location>
</feature>
<feature type="repeat" description="LRR 2">
    <location>
        <begin position="101"/>
        <end position="122"/>
    </location>
</feature>
<feature type="repeat" description="LRR 3">
    <location>
        <begin position="124"/>
        <end position="145"/>
    </location>
</feature>
<feature type="repeat" description="LRR 4">
    <location>
        <begin position="148"/>
        <end position="169"/>
    </location>
</feature>
<feature type="repeat" description="LRR 5">
    <location>
        <begin position="171"/>
        <end position="192"/>
    </location>
</feature>
<feature type="repeat" description="LRR 6">
    <location>
        <begin position="193"/>
        <end position="214"/>
    </location>
</feature>
<feature type="repeat" description="LRR 7">
    <location>
        <begin position="215"/>
        <end position="236"/>
    </location>
</feature>
<feature type="repeat" description="LRR 8">
    <location>
        <begin position="237"/>
        <end position="256"/>
    </location>
</feature>
<feature type="repeat" description="LRR 9">
    <location>
        <begin position="306"/>
        <end position="328"/>
    </location>
</feature>
<feature type="repeat" description="LRR 10">
    <location>
        <begin position="329"/>
        <end position="350"/>
    </location>
</feature>
<feature type="repeat" description="LRR 11">
    <location>
        <begin position="352"/>
        <end position="372"/>
    </location>
</feature>
<feature type="domain" description="Roc" evidence="5">
    <location>
        <begin position="390"/>
        <end position="750"/>
    </location>
</feature>
<feature type="domain" description="COR" evidence="2">
    <location>
        <begin position="758"/>
        <end position="892"/>
    </location>
</feature>
<feature type="repeat" description="WD 1">
    <location>
        <begin position="1051"/>
        <end position="1098"/>
    </location>
</feature>
<feature type="repeat" description="LRR 12">
    <location>
        <begin position="1237"/>
        <end position="1263"/>
    </location>
</feature>
<feature type="repeat" description="LRR 13">
    <location>
        <begin position="1274"/>
        <end position="1297"/>
    </location>
</feature>
<feature type="repeat" description="LRR 14">
    <location>
        <begin position="1325"/>
        <end position="1348"/>
    </location>
</feature>
<feature type="domain" description="Protein kinase" evidence="4">
    <location>
        <begin position="1356"/>
        <end position="1627"/>
    </location>
</feature>
<feature type="repeat" description="WD 2">
    <location>
        <begin position="1735"/>
        <end position="1774"/>
    </location>
</feature>
<feature type="repeat" description="WD 3">
    <location>
        <begin position="1778"/>
        <end position="1820"/>
    </location>
</feature>
<feature type="domain" description="PH" evidence="3">
    <location>
        <begin position="1821"/>
        <end position="1923"/>
    </location>
</feature>
<feature type="repeat" description="WD 4">
    <location>
        <begin position="2031"/>
        <end position="2068"/>
    </location>
</feature>
<feature type="region of interest" description="Small GTPase-like">
    <location>
        <begin position="390"/>
        <end position="750"/>
    </location>
</feature>
<feature type="region of interest" description="Disordered" evidence="7">
    <location>
        <begin position="491"/>
        <end position="582"/>
    </location>
</feature>
<feature type="region of interest" description="Disordered" evidence="7">
    <location>
        <begin position="602"/>
        <end position="621"/>
    </location>
</feature>
<feature type="region of interest" description="Disordered" evidence="7">
    <location>
        <begin position="905"/>
        <end position="995"/>
    </location>
</feature>
<feature type="region of interest" description="Disordered" evidence="7">
    <location>
        <begin position="1653"/>
        <end position="1699"/>
    </location>
</feature>
<feature type="compositionally biased region" description="Low complexity" evidence="7">
    <location>
        <begin position="492"/>
        <end position="512"/>
    </location>
</feature>
<feature type="compositionally biased region" description="Low complexity" evidence="7">
    <location>
        <begin position="519"/>
        <end position="531"/>
    </location>
</feature>
<feature type="compositionally biased region" description="Low complexity" evidence="7">
    <location>
        <begin position="539"/>
        <end position="568"/>
    </location>
</feature>
<feature type="compositionally biased region" description="Low complexity" evidence="7">
    <location>
        <begin position="602"/>
        <end position="617"/>
    </location>
</feature>
<feature type="compositionally biased region" description="Low complexity" evidence="7">
    <location>
        <begin position="905"/>
        <end position="941"/>
    </location>
</feature>
<feature type="compositionally biased region" description="Low complexity" evidence="7">
    <location>
        <begin position="960"/>
        <end position="977"/>
    </location>
</feature>
<feature type="compositionally biased region" description="Low complexity" evidence="7">
    <location>
        <begin position="1662"/>
        <end position="1699"/>
    </location>
</feature>
<feature type="active site" description="Proton acceptor" evidence="4 6">
    <location>
        <position position="1481"/>
    </location>
</feature>
<feature type="binding site" evidence="5">
    <location>
        <begin position="403"/>
        <end position="410"/>
    </location>
    <ligand>
        <name>GTP</name>
        <dbReference type="ChEBI" id="CHEBI:37565"/>
    </ligand>
</feature>
<feature type="binding site" evidence="5">
    <location>
        <begin position="634"/>
        <end position="638"/>
    </location>
    <ligand>
        <name>GTP</name>
        <dbReference type="ChEBI" id="CHEBI:37565"/>
    </ligand>
</feature>
<feature type="binding site" evidence="5">
    <location>
        <begin position="691"/>
        <end position="694"/>
    </location>
    <ligand>
        <name>GTP</name>
        <dbReference type="ChEBI" id="CHEBI:37565"/>
    </ligand>
</feature>
<feature type="binding site" evidence="4">
    <location>
        <begin position="1362"/>
        <end position="1370"/>
    </location>
    <ligand>
        <name>ATP</name>
        <dbReference type="ChEBI" id="CHEBI:30616"/>
    </ligand>
</feature>
<feature type="binding site" evidence="4">
    <location>
        <position position="1383"/>
    </location>
    <ligand>
        <name>ATP</name>
        <dbReference type="ChEBI" id="CHEBI:30616"/>
    </ligand>
</feature>
<feature type="sequence conflict" description="In Ref. 1; AAO83651." evidence="8" ref="1">
    <original>NSIHKQHYTINSNHYN</original>
    <variation>ISFLNHLYPINRNLYK</variation>
    <location>
        <begin position="2"/>
        <end position="17"/>
    </location>
</feature>
<feature type="sequence conflict" description="In Ref. 1; AAO83651." evidence="8" ref="1">
    <original>N</original>
    <variation>K</variation>
    <location>
        <position position="28"/>
    </location>
</feature>
<feature type="sequence conflict" description="In Ref. 1; AAO83651." evidence="8" ref="1">
    <original>TNNKSNNNSNNNNNETLED</original>
    <variation>PIIKGIIISIINNIEPLKN</variation>
    <location>
        <begin position="39"/>
        <end position="57"/>
    </location>
</feature>
<feature type="sequence conflict" description="In Ref. 1; AAO83651." evidence="8" ref="1">
    <original>DE</original>
    <variation>NQ</variation>
    <location>
        <begin position="797"/>
        <end position="798"/>
    </location>
</feature>
<organism>
    <name type="scientific">Dictyostelium discoideum</name>
    <name type="common">Social amoeba</name>
    <dbReference type="NCBI Taxonomy" id="44689"/>
    <lineage>
        <taxon>Eukaryota</taxon>
        <taxon>Amoebozoa</taxon>
        <taxon>Evosea</taxon>
        <taxon>Eumycetozoa</taxon>
        <taxon>Dictyostelia</taxon>
        <taxon>Dictyosteliales</taxon>
        <taxon>Dictyosteliaceae</taxon>
        <taxon>Dictyostelium</taxon>
    </lineage>
</organism>
<proteinExistence type="inferred from homology"/>